<accession>Q8NBB2</accession>
<keyword id="KW-1185">Reference proteome</keyword>
<protein>
    <recommendedName>
        <fullName evidence="3">Putative uncharacterized protein ST20-AS1</fullName>
    </recommendedName>
    <alternativeName>
        <fullName evidence="3">ST20 antisense RNA 1</fullName>
    </alternativeName>
    <alternativeName>
        <fullName evidence="2">ST20 antisense gene protein 1</fullName>
    </alternativeName>
</protein>
<reference key="1">
    <citation type="journal article" date="2004" name="Nat. Genet.">
        <title>Complete sequencing and characterization of 21,243 full-length human cDNAs.</title>
        <authorList>
            <person name="Ota T."/>
            <person name="Suzuki Y."/>
            <person name="Nishikawa T."/>
            <person name="Otsuki T."/>
            <person name="Sugiyama T."/>
            <person name="Irie R."/>
            <person name="Wakamatsu A."/>
            <person name="Hayashi K."/>
            <person name="Sato H."/>
            <person name="Nagai K."/>
            <person name="Kimura K."/>
            <person name="Makita H."/>
            <person name="Sekine M."/>
            <person name="Obayashi M."/>
            <person name="Nishi T."/>
            <person name="Shibahara T."/>
            <person name="Tanaka T."/>
            <person name="Ishii S."/>
            <person name="Yamamoto J."/>
            <person name="Saito K."/>
            <person name="Kawai Y."/>
            <person name="Isono Y."/>
            <person name="Nakamura Y."/>
            <person name="Nagahari K."/>
            <person name="Murakami K."/>
            <person name="Yasuda T."/>
            <person name="Iwayanagi T."/>
            <person name="Wagatsuma M."/>
            <person name="Shiratori A."/>
            <person name="Sudo H."/>
            <person name="Hosoiri T."/>
            <person name="Kaku Y."/>
            <person name="Kodaira H."/>
            <person name="Kondo H."/>
            <person name="Sugawara M."/>
            <person name="Takahashi M."/>
            <person name="Kanda K."/>
            <person name="Yokoi T."/>
            <person name="Furuya T."/>
            <person name="Kikkawa E."/>
            <person name="Omura Y."/>
            <person name="Abe K."/>
            <person name="Kamihara K."/>
            <person name="Katsuta N."/>
            <person name="Sato K."/>
            <person name="Tanikawa M."/>
            <person name="Yamazaki M."/>
            <person name="Ninomiya K."/>
            <person name="Ishibashi T."/>
            <person name="Yamashita H."/>
            <person name="Murakawa K."/>
            <person name="Fujimori K."/>
            <person name="Tanai H."/>
            <person name="Kimata M."/>
            <person name="Watanabe M."/>
            <person name="Hiraoka S."/>
            <person name="Chiba Y."/>
            <person name="Ishida S."/>
            <person name="Ono Y."/>
            <person name="Takiguchi S."/>
            <person name="Watanabe S."/>
            <person name="Yosida M."/>
            <person name="Hotuta T."/>
            <person name="Kusano J."/>
            <person name="Kanehori K."/>
            <person name="Takahashi-Fujii A."/>
            <person name="Hara H."/>
            <person name="Tanase T.-O."/>
            <person name="Nomura Y."/>
            <person name="Togiya S."/>
            <person name="Komai F."/>
            <person name="Hara R."/>
            <person name="Takeuchi K."/>
            <person name="Arita M."/>
            <person name="Imose N."/>
            <person name="Musashino K."/>
            <person name="Yuuki H."/>
            <person name="Oshima A."/>
            <person name="Sasaki N."/>
            <person name="Aotsuka S."/>
            <person name="Yoshikawa Y."/>
            <person name="Matsunawa H."/>
            <person name="Ichihara T."/>
            <person name="Shiohata N."/>
            <person name="Sano S."/>
            <person name="Moriya S."/>
            <person name="Momiyama H."/>
            <person name="Satoh N."/>
            <person name="Takami S."/>
            <person name="Terashima Y."/>
            <person name="Suzuki O."/>
            <person name="Nakagawa S."/>
            <person name="Senoh A."/>
            <person name="Mizoguchi H."/>
            <person name="Goto Y."/>
            <person name="Shimizu F."/>
            <person name="Wakebe H."/>
            <person name="Hishigaki H."/>
            <person name="Watanabe T."/>
            <person name="Sugiyama A."/>
            <person name="Takemoto M."/>
            <person name="Kawakami B."/>
            <person name="Yamazaki M."/>
            <person name="Watanabe K."/>
            <person name="Kumagai A."/>
            <person name="Itakura S."/>
            <person name="Fukuzumi Y."/>
            <person name="Fujimori Y."/>
            <person name="Komiyama M."/>
            <person name="Tashiro H."/>
            <person name="Tanigami A."/>
            <person name="Fujiwara T."/>
            <person name="Ono T."/>
            <person name="Yamada K."/>
            <person name="Fujii Y."/>
            <person name="Ozaki K."/>
            <person name="Hirao M."/>
            <person name="Ohmori Y."/>
            <person name="Kawabata A."/>
            <person name="Hikiji T."/>
            <person name="Kobatake N."/>
            <person name="Inagaki H."/>
            <person name="Ikema Y."/>
            <person name="Okamoto S."/>
            <person name="Okitani R."/>
            <person name="Kawakami T."/>
            <person name="Noguchi S."/>
            <person name="Itoh T."/>
            <person name="Shigeta K."/>
            <person name="Senba T."/>
            <person name="Matsumura K."/>
            <person name="Nakajima Y."/>
            <person name="Mizuno T."/>
            <person name="Morinaga M."/>
            <person name="Sasaki M."/>
            <person name="Togashi T."/>
            <person name="Oyama M."/>
            <person name="Hata H."/>
            <person name="Watanabe M."/>
            <person name="Komatsu T."/>
            <person name="Mizushima-Sugano J."/>
            <person name="Satoh T."/>
            <person name="Shirai Y."/>
            <person name="Takahashi Y."/>
            <person name="Nakagawa K."/>
            <person name="Okumura K."/>
            <person name="Nagase T."/>
            <person name="Nomura N."/>
            <person name="Kikuchi H."/>
            <person name="Masuho Y."/>
            <person name="Yamashita R."/>
            <person name="Nakai K."/>
            <person name="Yada T."/>
            <person name="Nakamura Y."/>
            <person name="Ohara O."/>
            <person name="Isogai T."/>
            <person name="Sugano S."/>
        </authorList>
    </citation>
    <scope>NUCLEOTIDE SEQUENCE [LARGE SCALE MRNA]</scope>
    <source>
        <tissue>Substantia nigra</tissue>
    </source>
</reference>
<reference key="2">
    <citation type="journal article" date="2004" name="Genome Res.">
        <title>The status, quality, and expansion of the NIH full-length cDNA project: the Mammalian Gene Collection (MGC).</title>
        <authorList>
            <consortium name="The MGC Project Team"/>
        </authorList>
    </citation>
    <scope>NUCLEOTIDE SEQUENCE [LARGE SCALE MRNA]</scope>
</reference>
<evidence type="ECO:0000256" key="1">
    <source>
        <dbReference type="SAM" id="MobiDB-lite"/>
    </source>
</evidence>
<evidence type="ECO:0000305" key="2"/>
<evidence type="ECO:0000312" key="3">
    <source>
        <dbReference type="HGNC" id="HGNC:27521"/>
    </source>
</evidence>
<name>STAS1_HUMAN</name>
<sequence length="130" mass="13907">MPRPASESWSPIQSRIPAYKAVSHLRLLPTANSPSGSNQPTNPNRAQHPEGPQSREGATSPVLASLEPPTPTDLPSARARPRVPAESGPGWLHKARRPTRGILRDVLRHRGVPAQPRPAPGAHQLSSPSS</sequence>
<feature type="chain" id="PRO_0000337133" description="Putative uncharacterized protein ST20-AS1">
    <location>
        <begin position="1"/>
        <end position="130"/>
    </location>
</feature>
<feature type="region of interest" description="Disordered" evidence="1">
    <location>
        <begin position="23"/>
        <end position="130"/>
    </location>
</feature>
<feature type="compositionally biased region" description="Polar residues" evidence="1">
    <location>
        <begin position="30"/>
        <end position="45"/>
    </location>
</feature>
<feature type="sequence variant" id="VAR_050885" description="In dbSNP:rs2733102.">
    <original>V</original>
    <variation>A</variation>
    <location>
        <position position="62"/>
    </location>
</feature>
<comment type="caution">
    <text evidence="2">Product of a dubious CDS prediction. May be a non-coding RNA. No experimental confirmation available.</text>
</comment>
<organism>
    <name type="scientific">Homo sapiens</name>
    <name type="common">Human</name>
    <dbReference type="NCBI Taxonomy" id="9606"/>
    <lineage>
        <taxon>Eukaryota</taxon>
        <taxon>Metazoa</taxon>
        <taxon>Chordata</taxon>
        <taxon>Craniata</taxon>
        <taxon>Vertebrata</taxon>
        <taxon>Euteleostomi</taxon>
        <taxon>Mammalia</taxon>
        <taxon>Eutheria</taxon>
        <taxon>Euarchontoglires</taxon>
        <taxon>Primates</taxon>
        <taxon>Haplorrhini</taxon>
        <taxon>Catarrhini</taxon>
        <taxon>Hominidae</taxon>
        <taxon>Homo</taxon>
    </lineage>
</organism>
<gene>
    <name evidence="3" type="primary">ST20-AS1</name>
    <name evidence="3" type="synonym">C15orf37</name>
</gene>
<proteinExistence type="uncertain"/>
<dbReference type="EMBL" id="AK091107">
    <property type="protein sequence ID" value="BAC03584.1"/>
    <property type="molecule type" value="mRNA"/>
</dbReference>
<dbReference type="EMBL" id="BC101201">
    <property type="protein sequence ID" value="AAI01202.1"/>
    <property type="molecule type" value="mRNA"/>
</dbReference>
<dbReference type="EMBL" id="BC101202">
    <property type="protein sequence ID" value="AAI01203.1"/>
    <property type="molecule type" value="mRNA"/>
</dbReference>
<dbReference type="EMBL" id="BC101203">
    <property type="protein sequence ID" value="AAI01204.1"/>
    <property type="molecule type" value="mRNA"/>
</dbReference>
<dbReference type="IntAct" id="Q8NBB2">
    <property type="interactions" value="1"/>
</dbReference>
<dbReference type="BioMuta" id="HGNC:27521"/>
<dbReference type="AGR" id="HGNC:27521"/>
<dbReference type="GeneCards" id="ST20-AS1"/>
<dbReference type="HGNC" id="HGNC:27521">
    <property type="gene designation" value="ST20-AS1"/>
</dbReference>
<dbReference type="neXtProt" id="NX_Q8NBB2"/>
<dbReference type="InParanoid" id="Q8NBB2"/>
<dbReference type="PAN-GO" id="Q8NBB2">
    <property type="GO annotations" value="0 GO annotations based on evolutionary models"/>
</dbReference>
<dbReference type="PathwayCommons" id="Q8NBB2"/>
<dbReference type="SignaLink" id="Q8NBB2"/>
<dbReference type="ChiTaRS" id="ST20-AS1">
    <property type="organism name" value="human"/>
</dbReference>
<dbReference type="Pharos" id="Q8NBB2">
    <property type="development level" value="Tdark"/>
</dbReference>
<dbReference type="Proteomes" id="UP000005640">
    <property type="component" value="Unplaced"/>
</dbReference>
<dbReference type="RNAct" id="Q8NBB2">
    <property type="molecule type" value="protein"/>
</dbReference>